<proteinExistence type="predicted"/>
<comment type="function">
    <text>Required for activation of most nif operons, which are directly involved in nitrogen fixation.</text>
</comment>
<comment type="subunit">
    <text>Interacts with sigma-54.</text>
</comment>
<gene>
    <name type="primary">nifA</name>
</gene>
<accession>P27713</accession>
<evidence type="ECO:0000250" key="1"/>
<evidence type="ECO:0000250" key="2">
    <source>
        <dbReference type="UniProtKB" id="P05407"/>
    </source>
</evidence>
<evidence type="ECO:0000255" key="3">
    <source>
        <dbReference type="PROSITE-ProRule" id="PRU00193"/>
    </source>
</evidence>
<name>NIFA_HERSE</name>
<dbReference type="EMBL" id="M60319">
    <property type="protein sequence ID" value="AAA25027.1"/>
    <property type="molecule type" value="Genomic_DNA"/>
</dbReference>
<dbReference type="PIR" id="A44813">
    <property type="entry name" value="A44813"/>
</dbReference>
<dbReference type="SMR" id="P27713"/>
<dbReference type="GO" id="GO:0005524">
    <property type="term" value="F:ATP binding"/>
    <property type="evidence" value="ECO:0007669"/>
    <property type="project" value="UniProtKB-KW"/>
</dbReference>
<dbReference type="GO" id="GO:0016887">
    <property type="term" value="F:ATP hydrolysis activity"/>
    <property type="evidence" value="ECO:0007669"/>
    <property type="project" value="InterPro"/>
</dbReference>
<dbReference type="GO" id="GO:0003700">
    <property type="term" value="F:DNA-binding transcription factor activity"/>
    <property type="evidence" value="ECO:0007669"/>
    <property type="project" value="InterPro"/>
</dbReference>
<dbReference type="GO" id="GO:0046872">
    <property type="term" value="F:metal ion binding"/>
    <property type="evidence" value="ECO:0007669"/>
    <property type="project" value="UniProtKB-KW"/>
</dbReference>
<dbReference type="GO" id="GO:0043565">
    <property type="term" value="F:sequence-specific DNA binding"/>
    <property type="evidence" value="ECO:0007669"/>
    <property type="project" value="InterPro"/>
</dbReference>
<dbReference type="GO" id="GO:0009399">
    <property type="term" value="P:nitrogen fixation"/>
    <property type="evidence" value="ECO:0007669"/>
    <property type="project" value="UniProtKB-KW"/>
</dbReference>
<dbReference type="GO" id="GO:0000160">
    <property type="term" value="P:phosphorelay signal transduction system"/>
    <property type="evidence" value="ECO:0007669"/>
    <property type="project" value="UniProtKB-KW"/>
</dbReference>
<dbReference type="GO" id="GO:0045893">
    <property type="term" value="P:positive regulation of DNA-templated transcription"/>
    <property type="evidence" value="ECO:0000315"/>
    <property type="project" value="CACAO"/>
</dbReference>
<dbReference type="CDD" id="cd00009">
    <property type="entry name" value="AAA"/>
    <property type="match status" value="1"/>
</dbReference>
<dbReference type="FunFam" id="1.10.10.60:FF:000765">
    <property type="match status" value="1"/>
</dbReference>
<dbReference type="FunFam" id="1.10.8.60:FF:000045">
    <property type="entry name" value="Anaerobic nitric oxide reductase transcription regulator NorR"/>
    <property type="match status" value="1"/>
</dbReference>
<dbReference type="FunFam" id="3.40.50.300:FF:000006">
    <property type="entry name" value="DNA-binding transcriptional regulator NtrC"/>
    <property type="match status" value="1"/>
</dbReference>
<dbReference type="FunFam" id="3.30.450.40:FF:000081">
    <property type="entry name" value="Vanadium nitrogenase sigma54-dependent transcriptional activator, VnfA"/>
    <property type="match status" value="1"/>
</dbReference>
<dbReference type="Gene3D" id="1.10.8.60">
    <property type="match status" value="1"/>
</dbReference>
<dbReference type="Gene3D" id="3.30.450.40">
    <property type="match status" value="1"/>
</dbReference>
<dbReference type="Gene3D" id="1.10.10.60">
    <property type="entry name" value="Homeodomain-like"/>
    <property type="match status" value="1"/>
</dbReference>
<dbReference type="Gene3D" id="3.40.50.300">
    <property type="entry name" value="P-loop containing nucleotide triphosphate hydrolases"/>
    <property type="match status" value="1"/>
</dbReference>
<dbReference type="InterPro" id="IPR003593">
    <property type="entry name" value="AAA+_ATPase"/>
</dbReference>
<dbReference type="InterPro" id="IPR003018">
    <property type="entry name" value="GAF"/>
</dbReference>
<dbReference type="InterPro" id="IPR029016">
    <property type="entry name" value="GAF-like_dom_sf"/>
</dbReference>
<dbReference type="InterPro" id="IPR009057">
    <property type="entry name" value="Homeodomain-like_sf"/>
</dbReference>
<dbReference type="InterPro" id="IPR002197">
    <property type="entry name" value="HTH_Fis"/>
</dbReference>
<dbReference type="InterPro" id="IPR010113">
    <property type="entry name" value="Nif-specific_regulatory_prot"/>
</dbReference>
<dbReference type="InterPro" id="IPR027417">
    <property type="entry name" value="P-loop_NTPase"/>
</dbReference>
<dbReference type="InterPro" id="IPR002078">
    <property type="entry name" value="Sigma_54_int"/>
</dbReference>
<dbReference type="InterPro" id="IPR025662">
    <property type="entry name" value="Sigma_54_int_dom_ATP-bd_1"/>
</dbReference>
<dbReference type="InterPro" id="IPR025943">
    <property type="entry name" value="Sigma_54_int_dom_ATP-bd_2"/>
</dbReference>
<dbReference type="InterPro" id="IPR025944">
    <property type="entry name" value="Sigma_54_int_dom_CS"/>
</dbReference>
<dbReference type="NCBIfam" id="TIGR01817">
    <property type="entry name" value="nifA"/>
    <property type="match status" value="1"/>
</dbReference>
<dbReference type="PANTHER" id="PTHR32071:SF117">
    <property type="entry name" value="PTS-DEPENDENT DIHYDROXYACETONE KINASE OPERON REGULATORY PROTEIN-RELATED"/>
    <property type="match status" value="1"/>
</dbReference>
<dbReference type="PANTHER" id="PTHR32071">
    <property type="entry name" value="TRANSCRIPTIONAL REGULATORY PROTEIN"/>
    <property type="match status" value="1"/>
</dbReference>
<dbReference type="Pfam" id="PF01590">
    <property type="entry name" value="GAF"/>
    <property type="match status" value="1"/>
</dbReference>
<dbReference type="Pfam" id="PF02954">
    <property type="entry name" value="HTH_8"/>
    <property type="match status" value="1"/>
</dbReference>
<dbReference type="Pfam" id="PF00158">
    <property type="entry name" value="Sigma54_activat"/>
    <property type="match status" value="1"/>
</dbReference>
<dbReference type="PRINTS" id="PR01590">
    <property type="entry name" value="HTHFIS"/>
</dbReference>
<dbReference type="SMART" id="SM00382">
    <property type="entry name" value="AAA"/>
    <property type="match status" value="1"/>
</dbReference>
<dbReference type="SMART" id="SM00065">
    <property type="entry name" value="GAF"/>
    <property type="match status" value="1"/>
</dbReference>
<dbReference type="SUPFAM" id="SSF55781">
    <property type="entry name" value="GAF domain-like"/>
    <property type="match status" value="1"/>
</dbReference>
<dbReference type="SUPFAM" id="SSF46689">
    <property type="entry name" value="Homeodomain-like"/>
    <property type="match status" value="1"/>
</dbReference>
<dbReference type="SUPFAM" id="SSF52540">
    <property type="entry name" value="P-loop containing nucleoside triphosphate hydrolases"/>
    <property type="match status" value="1"/>
</dbReference>
<dbReference type="PROSITE" id="PS00675">
    <property type="entry name" value="SIGMA54_INTERACT_1"/>
    <property type="match status" value="1"/>
</dbReference>
<dbReference type="PROSITE" id="PS00676">
    <property type="entry name" value="SIGMA54_INTERACT_2"/>
    <property type="match status" value="1"/>
</dbReference>
<dbReference type="PROSITE" id="PS00688">
    <property type="entry name" value="SIGMA54_INTERACT_3"/>
    <property type="match status" value="1"/>
</dbReference>
<dbReference type="PROSITE" id="PS50045">
    <property type="entry name" value="SIGMA54_INTERACT_4"/>
    <property type="match status" value="1"/>
</dbReference>
<organism>
    <name type="scientific">Herbaspirillum seropedicae</name>
    <dbReference type="NCBI Taxonomy" id="964"/>
    <lineage>
        <taxon>Bacteria</taxon>
        <taxon>Pseudomonadati</taxon>
        <taxon>Pseudomonadota</taxon>
        <taxon>Betaproteobacteria</taxon>
        <taxon>Burkholderiales</taxon>
        <taxon>Oxalobacteraceae</taxon>
        <taxon>Herbaspirillum</taxon>
    </lineage>
</organism>
<reference key="1">
    <citation type="journal article" date="1991" name="J. Gen. Microbiol.">
        <title>Sequence and structural organization of a nif A-like gene and part of a nifB-like gene of Herbaspirillum seropedicae strain Z78.</title>
        <authorList>
            <person name="Souza E.M."/>
            <person name="Funayama S."/>
            <person name="Rigo L.U."/>
            <person name="Yates M.G."/>
            <person name="Pedrosa F.O."/>
        </authorList>
    </citation>
    <scope>NUCLEOTIDE SEQUENCE [GENOMIC DNA]</scope>
    <source>
        <strain>ATCC 35893 / DSM 6446 / LMG 6514 / Z78</strain>
    </source>
</reference>
<sequence length="542" mass="60880">MATILDDRSVNLELVTIYEISKILGSSLDLSKTLREVLNVLSAHLETKRVLLSLMQDSGELQLVSAIGLSYEEFQSGRYRVGEGITGKIFQTETPIVVRDLAQEPLFLARTSPRQSQDGEVISFVGVPIKAAREMLGVLCVFRDGQSPSRSVDHEVRLLTMVANLIGQTVRLYRSVAAERQQLQEEKRQLSRQLQGKYKLDNVIGISKAMQEVFAQVHQSAPSRSTMLLRGESGTGKEVIARAIHYLSPRKDGPFIKVNCAALSETLLESELFGHEKGAFTGAQGERKGRFELAHGGTLFLDEIGEISPAFQAKLLRVLQEREFERVGGSRSIKVDVRLVTATNRDLEKAVAKGEFRADLYYRINVVSIFIPPLRERREDIPYLVEHFLEKFRVENQRAMVAMSPQAMKVMMNCYWPGNVRELENCVERTATMMRGDLITEVHFSCQQNKCLTKVLHEPGQQQPVVVVPLERISAPYGAIFAEWDGQGQATGAAPPTSERERLIWAMEQCGWVQAKAARALNISPRQMGYALQKFNIEVKKF</sequence>
<keyword id="KW-0010">Activator</keyword>
<keyword id="KW-0067">ATP-binding</keyword>
<keyword id="KW-0238">DNA-binding</keyword>
<keyword id="KW-0479">Metal-binding</keyword>
<keyword id="KW-0535">Nitrogen fixation</keyword>
<keyword id="KW-0547">Nucleotide-binding</keyword>
<keyword id="KW-0804">Transcription</keyword>
<keyword id="KW-0805">Transcription regulation</keyword>
<keyword id="KW-0902">Two-component regulatory system</keyword>
<protein>
    <recommendedName>
        <fullName>Nif-specific regulatory protein</fullName>
    </recommendedName>
</protein>
<feature type="chain" id="PRO_0000081307" description="Nif-specific regulatory protein">
    <location>
        <begin position="1"/>
        <end position="542"/>
    </location>
</feature>
<feature type="domain" description="GAF">
    <location>
        <begin position="29"/>
        <end position="170"/>
    </location>
</feature>
<feature type="domain" description="Sigma-54 factor interaction" evidence="3">
    <location>
        <begin position="203"/>
        <end position="432"/>
    </location>
</feature>
<feature type="DNA-binding region" description="H-T-H motif" evidence="1">
    <location>
        <begin position="514"/>
        <end position="533"/>
    </location>
</feature>
<feature type="region of interest" description="Inter-domain linker">
    <location>
        <begin position="433"/>
        <end position="499"/>
    </location>
</feature>
<feature type="region of interest" description="C-terminal DNA-binding domain">
    <location>
        <begin position="500"/>
        <end position="542"/>
    </location>
</feature>
<feature type="binding site" evidence="3">
    <location>
        <begin position="231"/>
        <end position="238"/>
    </location>
    <ligand>
        <name>ATP</name>
        <dbReference type="ChEBI" id="CHEBI:30616"/>
    </ligand>
</feature>
<feature type="binding site" evidence="3">
    <location>
        <begin position="294"/>
        <end position="303"/>
    </location>
    <ligand>
        <name>ATP</name>
        <dbReference type="ChEBI" id="CHEBI:30616"/>
    </ligand>
</feature>
<feature type="binding site" evidence="2">
    <location>
        <position position="446"/>
    </location>
    <ligand>
        <name>a divalent metal cation</name>
        <dbReference type="ChEBI" id="CHEBI:60240"/>
    </ligand>
</feature>
<feature type="binding site" evidence="2">
    <location>
        <position position="451"/>
    </location>
    <ligand>
        <name>a divalent metal cation</name>
        <dbReference type="ChEBI" id="CHEBI:60240"/>
    </ligand>
</feature>